<dbReference type="EC" id="2.7.7.3" evidence="1"/>
<dbReference type="EMBL" id="CP000492">
    <property type="protein sequence ID" value="ABL65062.1"/>
    <property type="molecule type" value="Genomic_DNA"/>
</dbReference>
<dbReference type="RefSeq" id="WP_011744889.1">
    <property type="nucleotide sequence ID" value="NC_008639.1"/>
</dbReference>
<dbReference type="SMR" id="A1BF85"/>
<dbReference type="STRING" id="290317.Cpha266_1015"/>
<dbReference type="KEGG" id="cph:Cpha266_1015"/>
<dbReference type="eggNOG" id="COG0669">
    <property type="taxonomic scope" value="Bacteria"/>
</dbReference>
<dbReference type="HOGENOM" id="CLU_100149_0_1_10"/>
<dbReference type="OrthoDB" id="9806661at2"/>
<dbReference type="UniPathway" id="UPA00241">
    <property type="reaction ID" value="UER00355"/>
</dbReference>
<dbReference type="Proteomes" id="UP000008701">
    <property type="component" value="Chromosome"/>
</dbReference>
<dbReference type="GO" id="GO:0005737">
    <property type="term" value="C:cytoplasm"/>
    <property type="evidence" value="ECO:0007669"/>
    <property type="project" value="UniProtKB-SubCell"/>
</dbReference>
<dbReference type="GO" id="GO:0005524">
    <property type="term" value="F:ATP binding"/>
    <property type="evidence" value="ECO:0007669"/>
    <property type="project" value="UniProtKB-KW"/>
</dbReference>
<dbReference type="GO" id="GO:0004595">
    <property type="term" value="F:pantetheine-phosphate adenylyltransferase activity"/>
    <property type="evidence" value="ECO:0007669"/>
    <property type="project" value="UniProtKB-UniRule"/>
</dbReference>
<dbReference type="GO" id="GO:0015937">
    <property type="term" value="P:coenzyme A biosynthetic process"/>
    <property type="evidence" value="ECO:0007669"/>
    <property type="project" value="UniProtKB-UniRule"/>
</dbReference>
<dbReference type="CDD" id="cd02163">
    <property type="entry name" value="PPAT"/>
    <property type="match status" value="1"/>
</dbReference>
<dbReference type="Gene3D" id="3.40.50.620">
    <property type="entry name" value="HUPs"/>
    <property type="match status" value="1"/>
</dbReference>
<dbReference type="HAMAP" id="MF_00151">
    <property type="entry name" value="PPAT_bact"/>
    <property type="match status" value="1"/>
</dbReference>
<dbReference type="InterPro" id="IPR004821">
    <property type="entry name" value="Cyt_trans-like"/>
</dbReference>
<dbReference type="InterPro" id="IPR001980">
    <property type="entry name" value="PPAT"/>
</dbReference>
<dbReference type="InterPro" id="IPR014729">
    <property type="entry name" value="Rossmann-like_a/b/a_fold"/>
</dbReference>
<dbReference type="NCBIfam" id="TIGR01510">
    <property type="entry name" value="coaD_prev_kdtB"/>
    <property type="match status" value="1"/>
</dbReference>
<dbReference type="NCBIfam" id="TIGR00125">
    <property type="entry name" value="cyt_tran_rel"/>
    <property type="match status" value="1"/>
</dbReference>
<dbReference type="PANTHER" id="PTHR21342">
    <property type="entry name" value="PHOSPHOPANTETHEINE ADENYLYLTRANSFERASE"/>
    <property type="match status" value="1"/>
</dbReference>
<dbReference type="PANTHER" id="PTHR21342:SF1">
    <property type="entry name" value="PHOSPHOPANTETHEINE ADENYLYLTRANSFERASE"/>
    <property type="match status" value="1"/>
</dbReference>
<dbReference type="Pfam" id="PF01467">
    <property type="entry name" value="CTP_transf_like"/>
    <property type="match status" value="1"/>
</dbReference>
<dbReference type="PRINTS" id="PR01020">
    <property type="entry name" value="LPSBIOSNTHSS"/>
</dbReference>
<dbReference type="SUPFAM" id="SSF52374">
    <property type="entry name" value="Nucleotidylyl transferase"/>
    <property type="match status" value="1"/>
</dbReference>
<organism>
    <name type="scientific">Chlorobium phaeobacteroides (strain DSM 266 / SMG 266 / 2430)</name>
    <dbReference type="NCBI Taxonomy" id="290317"/>
    <lineage>
        <taxon>Bacteria</taxon>
        <taxon>Pseudomonadati</taxon>
        <taxon>Chlorobiota</taxon>
        <taxon>Chlorobiia</taxon>
        <taxon>Chlorobiales</taxon>
        <taxon>Chlorobiaceae</taxon>
        <taxon>Chlorobium/Pelodictyon group</taxon>
        <taxon>Chlorobium</taxon>
    </lineage>
</organism>
<reference key="1">
    <citation type="submission" date="2006-12" db="EMBL/GenBank/DDBJ databases">
        <title>Complete sequence of Chlorobium phaeobacteroides DSM 266.</title>
        <authorList>
            <consortium name="US DOE Joint Genome Institute"/>
            <person name="Copeland A."/>
            <person name="Lucas S."/>
            <person name="Lapidus A."/>
            <person name="Barry K."/>
            <person name="Detter J.C."/>
            <person name="Glavina del Rio T."/>
            <person name="Hammon N."/>
            <person name="Israni S."/>
            <person name="Pitluck S."/>
            <person name="Goltsman E."/>
            <person name="Schmutz J."/>
            <person name="Larimer F."/>
            <person name="Land M."/>
            <person name="Hauser L."/>
            <person name="Mikhailova N."/>
            <person name="Li T."/>
            <person name="Overmann J."/>
            <person name="Bryant D.A."/>
            <person name="Richardson P."/>
        </authorList>
    </citation>
    <scope>NUCLEOTIDE SEQUENCE [LARGE SCALE GENOMIC DNA]</scope>
    <source>
        <strain>DSM 266 / SMG 266 / 2430</strain>
    </source>
</reference>
<comment type="function">
    <text evidence="1">Reversibly transfers an adenylyl group from ATP to 4'-phosphopantetheine, yielding dephospho-CoA (dPCoA) and pyrophosphate.</text>
</comment>
<comment type="catalytic activity">
    <reaction evidence="1">
        <text>(R)-4'-phosphopantetheine + ATP + H(+) = 3'-dephospho-CoA + diphosphate</text>
        <dbReference type="Rhea" id="RHEA:19801"/>
        <dbReference type="ChEBI" id="CHEBI:15378"/>
        <dbReference type="ChEBI" id="CHEBI:30616"/>
        <dbReference type="ChEBI" id="CHEBI:33019"/>
        <dbReference type="ChEBI" id="CHEBI:57328"/>
        <dbReference type="ChEBI" id="CHEBI:61723"/>
        <dbReference type="EC" id="2.7.7.3"/>
    </reaction>
</comment>
<comment type="cofactor">
    <cofactor evidence="1">
        <name>Mg(2+)</name>
        <dbReference type="ChEBI" id="CHEBI:18420"/>
    </cofactor>
</comment>
<comment type="pathway">
    <text evidence="1">Cofactor biosynthesis; coenzyme A biosynthesis; CoA from (R)-pantothenate: step 4/5.</text>
</comment>
<comment type="subunit">
    <text evidence="1">Homohexamer.</text>
</comment>
<comment type="subcellular location">
    <subcellularLocation>
        <location evidence="1">Cytoplasm</location>
    </subcellularLocation>
</comment>
<comment type="similarity">
    <text evidence="1">Belongs to the bacterial CoaD family.</text>
</comment>
<gene>
    <name evidence="1" type="primary">coaD</name>
    <name type="ordered locus">Cpha266_1015</name>
</gene>
<sequence>MKRKAIYPGTFDPFTNGHLDVLDRALNIFDEVEVVIGENSQKKTLFTVNERLEMIREIVIEFPGVTVAVLHDGLLANYARQVEARAIVRGVRQVKDFEYEFQMSLLNRHLYPEVTTVFLMPNVKYTYVASSIIREVAMLGGDVSKFVHPCVLAMLHKKLQENKKSNS</sequence>
<feature type="chain" id="PRO_1000011121" description="Phosphopantetheine adenylyltransferase">
    <location>
        <begin position="1"/>
        <end position="167"/>
    </location>
</feature>
<feature type="binding site" evidence="1">
    <location>
        <begin position="10"/>
        <end position="11"/>
    </location>
    <ligand>
        <name>ATP</name>
        <dbReference type="ChEBI" id="CHEBI:30616"/>
    </ligand>
</feature>
<feature type="binding site" evidence="1">
    <location>
        <position position="10"/>
    </location>
    <ligand>
        <name>substrate</name>
    </ligand>
</feature>
<feature type="binding site" evidence="1">
    <location>
        <position position="18"/>
    </location>
    <ligand>
        <name>ATP</name>
        <dbReference type="ChEBI" id="CHEBI:30616"/>
    </ligand>
</feature>
<feature type="binding site" evidence="1">
    <location>
        <position position="42"/>
    </location>
    <ligand>
        <name>substrate</name>
    </ligand>
</feature>
<feature type="binding site" evidence="1">
    <location>
        <position position="75"/>
    </location>
    <ligand>
        <name>substrate</name>
    </ligand>
</feature>
<feature type="binding site" evidence="1">
    <location>
        <position position="89"/>
    </location>
    <ligand>
        <name>substrate</name>
    </ligand>
</feature>
<feature type="binding site" evidence="1">
    <location>
        <begin position="90"/>
        <end position="92"/>
    </location>
    <ligand>
        <name>ATP</name>
        <dbReference type="ChEBI" id="CHEBI:30616"/>
    </ligand>
</feature>
<feature type="binding site" evidence="1">
    <location>
        <position position="100"/>
    </location>
    <ligand>
        <name>ATP</name>
        <dbReference type="ChEBI" id="CHEBI:30616"/>
    </ligand>
</feature>
<feature type="binding site" evidence="1">
    <location>
        <begin position="125"/>
        <end position="131"/>
    </location>
    <ligand>
        <name>ATP</name>
        <dbReference type="ChEBI" id="CHEBI:30616"/>
    </ligand>
</feature>
<feature type="site" description="Transition state stabilizer" evidence="1">
    <location>
        <position position="18"/>
    </location>
</feature>
<keyword id="KW-0067">ATP-binding</keyword>
<keyword id="KW-0173">Coenzyme A biosynthesis</keyword>
<keyword id="KW-0963">Cytoplasm</keyword>
<keyword id="KW-0460">Magnesium</keyword>
<keyword id="KW-0547">Nucleotide-binding</keyword>
<keyword id="KW-0548">Nucleotidyltransferase</keyword>
<keyword id="KW-1185">Reference proteome</keyword>
<keyword id="KW-0808">Transferase</keyword>
<name>COAD_CHLPD</name>
<proteinExistence type="inferred from homology"/>
<evidence type="ECO:0000255" key="1">
    <source>
        <dbReference type="HAMAP-Rule" id="MF_00151"/>
    </source>
</evidence>
<protein>
    <recommendedName>
        <fullName evidence="1">Phosphopantetheine adenylyltransferase</fullName>
        <ecNumber evidence="1">2.7.7.3</ecNumber>
    </recommendedName>
    <alternativeName>
        <fullName evidence="1">Dephospho-CoA pyrophosphorylase</fullName>
    </alternativeName>
    <alternativeName>
        <fullName evidence="1">Pantetheine-phosphate adenylyltransferase</fullName>
        <shortName evidence="1">PPAT</shortName>
    </alternativeName>
</protein>
<accession>A1BF85</accession>